<sequence>MERSVTAGKWLAYCRLMRIDKPIGSLLLLWPTLWALWLAGGGAPAPWTLFVFVAGVFLMRAAGCVINDYADRHFDGHVKRTASRPLPSGEVSEQSAKILFVVLVLLAFGLVLTLNKMTIWLSVAGLVLAWVYPFMKRVSHLPQFVLGAAFGWSIPMAYAAVSESLPATCWMMFLAYICWTVAYDTQYAMVDRDDDLKIGVKSTAILFGRFDNIIIGLLQFSMLALLLALGNITGLGIPYTISLLVAAGMFIYQQILTAGRERDACFKAFHNNKYAGMAIFIGVLFGL</sequence>
<reference key="1">
    <citation type="journal article" date="2004" name="Proc. Natl. Acad. Sci. U.S.A.">
        <title>Genome sequence of the enterobacterial phytopathogen Erwinia carotovora subsp. atroseptica and characterization of virulence factors.</title>
        <authorList>
            <person name="Bell K.S."/>
            <person name="Sebaihia M."/>
            <person name="Pritchard L."/>
            <person name="Holden M.T.G."/>
            <person name="Hyman L.J."/>
            <person name="Holeva M.C."/>
            <person name="Thomson N.R."/>
            <person name="Bentley S.D."/>
            <person name="Churcher L.J.C."/>
            <person name="Mungall K."/>
            <person name="Atkin R."/>
            <person name="Bason N."/>
            <person name="Brooks K."/>
            <person name="Chillingworth T."/>
            <person name="Clark K."/>
            <person name="Doggett J."/>
            <person name="Fraser A."/>
            <person name="Hance Z."/>
            <person name="Hauser H."/>
            <person name="Jagels K."/>
            <person name="Moule S."/>
            <person name="Norbertczak H."/>
            <person name="Ormond D."/>
            <person name="Price C."/>
            <person name="Quail M.A."/>
            <person name="Sanders M."/>
            <person name="Walker D."/>
            <person name="Whitehead S."/>
            <person name="Salmond G.P.C."/>
            <person name="Birch P.R.J."/>
            <person name="Parkhill J."/>
            <person name="Toth I.K."/>
        </authorList>
    </citation>
    <scope>NUCLEOTIDE SEQUENCE [LARGE SCALE GENOMIC DNA]</scope>
    <source>
        <strain>SCRI 1043 / ATCC BAA-672</strain>
    </source>
</reference>
<accession>Q6D9I8</accession>
<gene>
    <name evidence="1" type="primary">ubiA</name>
    <name type="ordered locus">ECA0627</name>
</gene>
<name>UBIA_PECAS</name>
<evidence type="ECO:0000255" key="1">
    <source>
        <dbReference type="HAMAP-Rule" id="MF_01635"/>
    </source>
</evidence>
<feature type="chain" id="PRO_0000262792" description="4-hydroxybenzoate octaprenyltransferase">
    <location>
        <begin position="1"/>
        <end position="287"/>
    </location>
</feature>
<feature type="transmembrane region" description="Helical" evidence="1">
    <location>
        <begin position="23"/>
        <end position="40"/>
    </location>
</feature>
<feature type="transmembrane region" description="Helical" evidence="1">
    <location>
        <begin position="98"/>
        <end position="118"/>
    </location>
</feature>
<feature type="transmembrane region" description="Helical" evidence="1">
    <location>
        <begin position="141"/>
        <end position="161"/>
    </location>
</feature>
<feature type="transmembrane region" description="Helical" evidence="1">
    <location>
        <begin position="163"/>
        <end position="183"/>
    </location>
</feature>
<feature type="transmembrane region" description="Helical" evidence="1">
    <location>
        <begin position="213"/>
        <end position="233"/>
    </location>
</feature>
<feature type="transmembrane region" description="Helical" evidence="1">
    <location>
        <begin position="235"/>
        <end position="255"/>
    </location>
</feature>
<protein>
    <recommendedName>
        <fullName evidence="1">4-hydroxybenzoate octaprenyltransferase</fullName>
        <ecNumber evidence="1">2.5.1.39</ecNumber>
    </recommendedName>
    <alternativeName>
        <fullName evidence="1">4-HB polyprenyltransferase</fullName>
    </alternativeName>
</protein>
<proteinExistence type="inferred from homology"/>
<comment type="function">
    <text evidence="1">Catalyzes the prenylation of para-hydroxybenzoate (PHB) with an all-trans polyprenyl group. Mediates the second step in the final reaction sequence of ubiquinone-8 (UQ-8) biosynthesis, which is the condensation of the polyisoprenoid side chain with PHB, generating the first membrane-bound Q intermediate 3-octaprenyl-4-hydroxybenzoate.</text>
</comment>
<comment type="catalytic activity">
    <reaction evidence="1">
        <text>all-trans-octaprenyl diphosphate + 4-hydroxybenzoate = 4-hydroxy-3-(all-trans-octaprenyl)benzoate + diphosphate</text>
        <dbReference type="Rhea" id="RHEA:27782"/>
        <dbReference type="ChEBI" id="CHEBI:1617"/>
        <dbReference type="ChEBI" id="CHEBI:17879"/>
        <dbReference type="ChEBI" id="CHEBI:33019"/>
        <dbReference type="ChEBI" id="CHEBI:57711"/>
        <dbReference type="EC" id="2.5.1.39"/>
    </reaction>
</comment>
<comment type="cofactor">
    <cofactor evidence="1">
        <name>Mg(2+)</name>
        <dbReference type="ChEBI" id="CHEBI:18420"/>
    </cofactor>
</comment>
<comment type="pathway">
    <text evidence="1">Cofactor biosynthesis; ubiquinone biosynthesis.</text>
</comment>
<comment type="subcellular location">
    <subcellularLocation>
        <location evidence="1">Cell inner membrane</location>
        <topology evidence="1">Multi-pass membrane protein</topology>
    </subcellularLocation>
</comment>
<comment type="similarity">
    <text evidence="1">Belongs to the UbiA prenyltransferase family.</text>
</comment>
<dbReference type="EC" id="2.5.1.39" evidence="1"/>
<dbReference type="EMBL" id="BX950851">
    <property type="protein sequence ID" value="CAG73542.1"/>
    <property type="molecule type" value="Genomic_DNA"/>
</dbReference>
<dbReference type="RefSeq" id="WP_011092245.1">
    <property type="nucleotide sequence ID" value="NC_004547.2"/>
</dbReference>
<dbReference type="SMR" id="Q6D9I8"/>
<dbReference type="STRING" id="218491.ECA0627"/>
<dbReference type="GeneID" id="57207376"/>
<dbReference type="KEGG" id="eca:ECA0627"/>
<dbReference type="PATRIC" id="fig|218491.5.peg.622"/>
<dbReference type="eggNOG" id="COG0382">
    <property type="taxonomic scope" value="Bacteria"/>
</dbReference>
<dbReference type="HOGENOM" id="CLU_034879_1_0_6"/>
<dbReference type="OrthoDB" id="9782418at2"/>
<dbReference type="UniPathway" id="UPA00232"/>
<dbReference type="Proteomes" id="UP000007966">
    <property type="component" value="Chromosome"/>
</dbReference>
<dbReference type="GO" id="GO:0005886">
    <property type="term" value="C:plasma membrane"/>
    <property type="evidence" value="ECO:0007669"/>
    <property type="project" value="UniProtKB-SubCell"/>
</dbReference>
<dbReference type="GO" id="GO:0008412">
    <property type="term" value="F:4-hydroxybenzoate polyprenyltransferase activity"/>
    <property type="evidence" value="ECO:0007669"/>
    <property type="project" value="UniProtKB-UniRule"/>
</dbReference>
<dbReference type="GO" id="GO:0006744">
    <property type="term" value="P:ubiquinone biosynthetic process"/>
    <property type="evidence" value="ECO:0007669"/>
    <property type="project" value="UniProtKB-UniRule"/>
</dbReference>
<dbReference type="CDD" id="cd13959">
    <property type="entry name" value="PT_UbiA_COQ2"/>
    <property type="match status" value="1"/>
</dbReference>
<dbReference type="FunFam" id="1.10.357.140:FF:000002">
    <property type="entry name" value="4-hydroxybenzoate octaprenyltransferase"/>
    <property type="match status" value="1"/>
</dbReference>
<dbReference type="FunFam" id="1.20.120.1780:FF:000001">
    <property type="entry name" value="4-hydroxybenzoate octaprenyltransferase"/>
    <property type="match status" value="1"/>
</dbReference>
<dbReference type="Gene3D" id="1.10.357.140">
    <property type="entry name" value="UbiA prenyltransferase"/>
    <property type="match status" value="1"/>
</dbReference>
<dbReference type="Gene3D" id="1.20.120.1780">
    <property type="entry name" value="UbiA prenyltransferase"/>
    <property type="match status" value="1"/>
</dbReference>
<dbReference type="HAMAP" id="MF_01635">
    <property type="entry name" value="UbiA"/>
    <property type="match status" value="1"/>
</dbReference>
<dbReference type="InterPro" id="IPR006370">
    <property type="entry name" value="HB_polyprenyltransferase-like"/>
</dbReference>
<dbReference type="InterPro" id="IPR039653">
    <property type="entry name" value="Prenyltransferase"/>
</dbReference>
<dbReference type="InterPro" id="IPR000537">
    <property type="entry name" value="UbiA_prenyltransferase"/>
</dbReference>
<dbReference type="InterPro" id="IPR030470">
    <property type="entry name" value="UbiA_prenylTrfase_CS"/>
</dbReference>
<dbReference type="InterPro" id="IPR044878">
    <property type="entry name" value="UbiA_sf"/>
</dbReference>
<dbReference type="NCBIfam" id="TIGR01474">
    <property type="entry name" value="ubiA_proteo"/>
    <property type="match status" value="1"/>
</dbReference>
<dbReference type="PANTHER" id="PTHR11048:SF28">
    <property type="entry name" value="4-HYDROXYBENZOATE POLYPRENYLTRANSFERASE, MITOCHONDRIAL"/>
    <property type="match status" value="1"/>
</dbReference>
<dbReference type="PANTHER" id="PTHR11048">
    <property type="entry name" value="PRENYLTRANSFERASES"/>
    <property type="match status" value="1"/>
</dbReference>
<dbReference type="Pfam" id="PF01040">
    <property type="entry name" value="UbiA"/>
    <property type="match status" value="1"/>
</dbReference>
<dbReference type="PROSITE" id="PS00943">
    <property type="entry name" value="UBIA"/>
    <property type="match status" value="1"/>
</dbReference>
<keyword id="KW-0997">Cell inner membrane</keyword>
<keyword id="KW-1003">Cell membrane</keyword>
<keyword id="KW-0460">Magnesium</keyword>
<keyword id="KW-0472">Membrane</keyword>
<keyword id="KW-1185">Reference proteome</keyword>
<keyword id="KW-0808">Transferase</keyword>
<keyword id="KW-0812">Transmembrane</keyword>
<keyword id="KW-1133">Transmembrane helix</keyword>
<keyword id="KW-0831">Ubiquinone biosynthesis</keyword>
<organism>
    <name type="scientific">Pectobacterium atrosepticum (strain SCRI 1043 / ATCC BAA-672)</name>
    <name type="common">Erwinia carotovora subsp. atroseptica</name>
    <dbReference type="NCBI Taxonomy" id="218491"/>
    <lineage>
        <taxon>Bacteria</taxon>
        <taxon>Pseudomonadati</taxon>
        <taxon>Pseudomonadota</taxon>
        <taxon>Gammaproteobacteria</taxon>
        <taxon>Enterobacterales</taxon>
        <taxon>Pectobacteriaceae</taxon>
        <taxon>Pectobacterium</taxon>
    </lineage>
</organism>